<protein>
    <recommendedName>
        <fullName>Oxysterol-binding protein-related protein 3</fullName>
        <shortName>ORP-3</shortName>
        <shortName>OSBP-related protein 3</shortName>
    </recommendedName>
</protein>
<sequence length="855" mass="96966">MSDEKNLGVSQKLVSPSRSTSSCSSKQGSRQDSWEVVEGLRGEMTYTQEPPVQKGFLLKKRKWPLKGWHKRFFCLEKGILKYAKSQADIEREKLHGCIDVGLSVMSVKKSSKCIDLDTEEHIYHLKVKSEELFDEWVSKLRHHRMYRQNEIAMFPRDVNHFFSGSSVTDSAPGVFESVSSRKRSSLSKQNSFPPGSNLSFSCGGDTRVPFWLQSSEDMEKCSKDMAHCHAYLLEMSQLLESMDVLHRTYSAPAINAIQVPKPFSGPVRLHSSNPNLSTLDFGEEKSYSDGSEASSEFSKMQEDLCHVAHKVYFALRSAFNSISVEREKLKQLMELDTSPSPSAQVVGLKHALSSALAQNTDLKERLRRIHAESLLLDPPAVPKPGDNLAEENSRDEGRALVHQLSNESRLSITDSLSEFFDAQEVLLSPSSSENEISDDDSYVSDISDNLSLDNLSNDLDNERQTLGPVLESSGEARSKRRTSLPAPGPNTSSVSLWSILRNNIGKDLSKVAMPVELNEPLNTLQRLCEELEYSELLDKASRIPSPLERMVYVAAFAISAYASSYFRAGSKPFNPVLGETYECIRQDKGFQFFAEQVSHHPPISACHAESGNFVFWQDVRWKNKFWGKSMEIVPIGTTHVTLPAFGDHFEWNKVTSCIHNILSGQRWIEHYGEIDIKNLNDDSCHCKVNFIKAKYWSTNAHEIEGTVFDRSGKAVHRLFGKWHESIYCGGASSSTCVWRANPMPKGYEQYYGFTQFALELNEMDPLSRSLLPPTDTRFRPDQRLLEEGNIEEAEVQKQRIEKLQRERRRVLEENGVEHQPRFFRKSSDDAWVSNGTYLELRKDLGFSKLDHPVLW</sequence>
<comment type="function">
    <text evidence="1">Phosphoinositide-binding protein which associates with both cell and endoplasmic reticulum (ER) membranes. Can bind to the ER membrane protein VAPA and recruit VAPA to plasma membrane sites, thus linking these intracellular compartments. The ORP3-VAPA complex stimulates RRAS signaling which in turn attenuates integrin beta-1 (ITGB1) activation at the cell surface. With VAPA, may regulate ER morphology. Has a role in regulation of the actin cytoskeleton, cell polarity and cell adhesion. Binds to phosphoinositides with preference for PI(3,4)P2 and PI(3,4,5)P3. Also binds 25-hydroxycholesterol and cholesterol.</text>
</comment>
<comment type="subunit">
    <text evidence="1 5">Homodimer (By similarity). Interacts with RRAS (By similarity). Interacts (phosphorylated form) with VAPA (By similarity). Interacts with OSBPL6 (PubMed:30028970).</text>
</comment>
<comment type="subcellular location">
    <subcellularLocation>
        <location evidence="5">Endoplasmic reticulum membrane</location>
        <topology evidence="6">Peripheral membrane protein</topology>
    </subcellularLocation>
    <subcellularLocation>
        <location evidence="5">Cytoplasm</location>
        <location evidence="5">Cytosol</location>
    </subcellularLocation>
    <subcellularLocation>
        <location evidence="5">Cell membrane</location>
        <topology evidence="6">Peripheral membrane protein</topology>
    </subcellularLocation>
    <subcellularLocation>
        <location evidence="1">Cell projection</location>
        <location evidence="1">Filopodium tip</location>
    </subcellularLocation>
    <subcellularLocation>
        <location evidence="1">Nucleus membrane</location>
        <topology evidence="6">Peripheral membrane protein</topology>
    </subcellularLocation>
    <text evidence="5">Co-localizes with OSBPL6 at contact sites between the plasma membrane and the endoplasmic reticulum.</text>
</comment>
<comment type="tissue specificity">
    <text evidence="4">Expressed in spinal ganglia. Expressed in a subset of small lymphocytes (at protein level).</text>
</comment>
<comment type="developmental stage">
    <text evidence="4">Expressed at higher levels in some regions of the developing central and peripheral nervous system, including hippocampal neuroepithelium, rhinencephalon, intermediate thalamus.</text>
</comment>
<comment type="domain">
    <text evidence="1">The FFAT 2 motif is required for interaction with VAPA and regulation of the endoplasmic reticulum targeting of ORP3. The FFAT 1 motif may contribute to VAPA binding.</text>
</comment>
<comment type="domain">
    <text evidence="1">The PH domain binds phosphoinositides, with a preference for PI(3,4)P2 and PI(3,4,5)P3. The PH domain mediates targeting to the plasma membrane.</text>
</comment>
<comment type="PTM">
    <text evidence="1">Phosphorylation is enhanced in vitro by phorbol-12-myristate-13-acetate (PMA), forskolin and calcium ionophore A23187. Phosphorylation seems to be stimulated in conditions of low cell-cell (or cell-matrix) adhesion.</text>
</comment>
<comment type="similarity">
    <text evidence="6">Belongs to the OSBP family.</text>
</comment>
<gene>
    <name type="primary">Osbpl3</name>
    <name type="synonym">Orp3</name>
</gene>
<proteinExistence type="evidence at protein level"/>
<dbReference type="EMBL" id="AK004768">
    <property type="protein sequence ID" value="BAB23547.1"/>
    <property type="molecule type" value="mRNA"/>
</dbReference>
<dbReference type="EMBL" id="AC008160">
    <property type="status" value="NOT_ANNOTATED_CDS"/>
    <property type="molecule type" value="Genomic_DNA"/>
</dbReference>
<dbReference type="EMBL" id="AC124689">
    <property type="status" value="NOT_ANNOTATED_CDS"/>
    <property type="molecule type" value="Genomic_DNA"/>
</dbReference>
<dbReference type="CCDS" id="CCDS39489.1"/>
<dbReference type="RefSeq" id="NP_001157117.1">
    <property type="nucleotide sequence ID" value="NM_001163645.1"/>
</dbReference>
<dbReference type="RefSeq" id="NP_082157.2">
    <property type="nucleotide sequence ID" value="NM_027881.3"/>
</dbReference>
<dbReference type="RefSeq" id="XP_006506696.1">
    <property type="nucleotide sequence ID" value="XM_006506633.5"/>
</dbReference>
<dbReference type="SMR" id="Q9DBS9"/>
<dbReference type="BioGRID" id="214879">
    <property type="interactions" value="5"/>
</dbReference>
<dbReference type="FunCoup" id="Q9DBS9">
    <property type="interactions" value="1698"/>
</dbReference>
<dbReference type="IntAct" id="Q9DBS9">
    <property type="interactions" value="1"/>
</dbReference>
<dbReference type="STRING" id="10090.ENSMUSP00000087473"/>
<dbReference type="GlyGen" id="Q9DBS9">
    <property type="glycosylation" value="1 site, 1 N-linked glycan (1 site)"/>
</dbReference>
<dbReference type="iPTMnet" id="Q9DBS9"/>
<dbReference type="PhosphoSitePlus" id="Q9DBS9"/>
<dbReference type="jPOST" id="Q9DBS9"/>
<dbReference type="PaxDb" id="10090-ENSMUSP00000110112"/>
<dbReference type="ProteomicsDB" id="293525"/>
<dbReference type="Pumba" id="Q9DBS9"/>
<dbReference type="Antibodypedia" id="12224">
    <property type="antibodies" value="115 antibodies from 26 providers"/>
</dbReference>
<dbReference type="DNASU" id="71720"/>
<dbReference type="Ensembl" id="ENSMUST00000114468.9">
    <property type="protein sequence ID" value="ENSMUSP00000110112.3"/>
    <property type="gene ID" value="ENSMUSG00000029822.16"/>
</dbReference>
<dbReference type="GeneID" id="71720"/>
<dbReference type="KEGG" id="mmu:71720"/>
<dbReference type="UCSC" id="uc009bwy.2">
    <property type="organism name" value="mouse"/>
</dbReference>
<dbReference type="AGR" id="MGI:1918970"/>
<dbReference type="CTD" id="26031"/>
<dbReference type="MGI" id="MGI:1918970">
    <property type="gene designation" value="Osbpl3"/>
</dbReference>
<dbReference type="VEuPathDB" id="HostDB:ENSMUSG00000029822"/>
<dbReference type="eggNOG" id="KOG1737">
    <property type="taxonomic scope" value="Eukaryota"/>
</dbReference>
<dbReference type="GeneTree" id="ENSGT00940000155957"/>
<dbReference type="InParanoid" id="Q9DBS9"/>
<dbReference type="OrthoDB" id="1854502at2759"/>
<dbReference type="TreeFam" id="TF320922"/>
<dbReference type="Reactome" id="R-MMU-192105">
    <property type="pathway name" value="Synthesis of bile acids and bile salts"/>
</dbReference>
<dbReference type="BioGRID-ORCS" id="71720">
    <property type="hits" value="2 hits in 66 CRISPR screens"/>
</dbReference>
<dbReference type="ChiTaRS" id="Osbpl3">
    <property type="organism name" value="mouse"/>
</dbReference>
<dbReference type="PRO" id="PR:Q9DBS9"/>
<dbReference type="Proteomes" id="UP000000589">
    <property type="component" value="Chromosome 6"/>
</dbReference>
<dbReference type="RNAct" id="Q9DBS9">
    <property type="molecule type" value="protein"/>
</dbReference>
<dbReference type="Bgee" id="ENSMUSG00000029822">
    <property type="expression patterns" value="Expressed in urinary bladder urothelium and 179 other cell types or tissues"/>
</dbReference>
<dbReference type="ExpressionAtlas" id="Q9DBS9">
    <property type="expression patterns" value="baseline and differential"/>
</dbReference>
<dbReference type="GO" id="GO:0005829">
    <property type="term" value="C:cytosol"/>
    <property type="evidence" value="ECO:0007669"/>
    <property type="project" value="UniProtKB-SubCell"/>
</dbReference>
<dbReference type="GO" id="GO:0005789">
    <property type="term" value="C:endoplasmic reticulum membrane"/>
    <property type="evidence" value="ECO:0007669"/>
    <property type="project" value="UniProtKB-SubCell"/>
</dbReference>
<dbReference type="GO" id="GO:0032433">
    <property type="term" value="C:filopodium tip"/>
    <property type="evidence" value="ECO:0007669"/>
    <property type="project" value="UniProtKB-SubCell"/>
</dbReference>
<dbReference type="GO" id="GO:0031965">
    <property type="term" value="C:nuclear membrane"/>
    <property type="evidence" value="ECO:0007669"/>
    <property type="project" value="UniProtKB-SubCell"/>
</dbReference>
<dbReference type="GO" id="GO:0005886">
    <property type="term" value="C:plasma membrane"/>
    <property type="evidence" value="ECO:0007669"/>
    <property type="project" value="UniProtKB-SubCell"/>
</dbReference>
<dbReference type="GO" id="GO:0008289">
    <property type="term" value="F:lipid binding"/>
    <property type="evidence" value="ECO:0007669"/>
    <property type="project" value="UniProtKB-KW"/>
</dbReference>
<dbReference type="GO" id="GO:0005319">
    <property type="term" value="F:lipid transporter activity"/>
    <property type="evidence" value="ECO:0007669"/>
    <property type="project" value="UniProtKB-ARBA"/>
</dbReference>
<dbReference type="CDD" id="cd13287">
    <property type="entry name" value="PH_ORP3_ORP6_ORP7"/>
    <property type="match status" value="1"/>
</dbReference>
<dbReference type="FunFam" id="2.30.29.30:FF:000011">
    <property type="entry name" value="Oxysterol-binding protein"/>
    <property type="match status" value="1"/>
</dbReference>
<dbReference type="FunFam" id="2.40.160.120:FF:000001">
    <property type="entry name" value="Oxysterol-binding protein"/>
    <property type="match status" value="1"/>
</dbReference>
<dbReference type="FunFam" id="3.30.70.3490:FF:000004">
    <property type="entry name" value="Oxysterol-binding protein"/>
    <property type="match status" value="1"/>
</dbReference>
<dbReference type="Gene3D" id="2.40.160.120">
    <property type="match status" value="1"/>
</dbReference>
<dbReference type="Gene3D" id="3.30.70.3490">
    <property type="match status" value="1"/>
</dbReference>
<dbReference type="Gene3D" id="2.30.29.30">
    <property type="entry name" value="Pleckstrin-homology domain (PH domain)/Phosphotyrosine-binding domain (PTB)"/>
    <property type="match status" value="1"/>
</dbReference>
<dbReference type="InterPro" id="IPR037239">
    <property type="entry name" value="OSBP_sf"/>
</dbReference>
<dbReference type="InterPro" id="IPR000648">
    <property type="entry name" value="Oxysterol-bd"/>
</dbReference>
<dbReference type="InterPro" id="IPR018494">
    <property type="entry name" value="Oxysterol-bd_CS"/>
</dbReference>
<dbReference type="InterPro" id="IPR011993">
    <property type="entry name" value="PH-like_dom_sf"/>
</dbReference>
<dbReference type="InterPro" id="IPR041680">
    <property type="entry name" value="PH_8"/>
</dbReference>
<dbReference type="InterPro" id="IPR001849">
    <property type="entry name" value="PH_domain"/>
</dbReference>
<dbReference type="PANTHER" id="PTHR10972">
    <property type="entry name" value="OXYSTEROL-BINDING PROTEIN-RELATED"/>
    <property type="match status" value="1"/>
</dbReference>
<dbReference type="PANTHER" id="PTHR10972:SF15">
    <property type="entry name" value="OXYSTEROL-BINDING PROTEIN-RELATED PROTEIN 3"/>
    <property type="match status" value="1"/>
</dbReference>
<dbReference type="Pfam" id="PF01237">
    <property type="entry name" value="Oxysterol_BP"/>
    <property type="match status" value="1"/>
</dbReference>
<dbReference type="Pfam" id="PF15409">
    <property type="entry name" value="PH_8"/>
    <property type="match status" value="1"/>
</dbReference>
<dbReference type="SMART" id="SM00233">
    <property type="entry name" value="PH"/>
    <property type="match status" value="1"/>
</dbReference>
<dbReference type="SUPFAM" id="SSF144000">
    <property type="entry name" value="Oxysterol-binding protein-like"/>
    <property type="match status" value="1"/>
</dbReference>
<dbReference type="SUPFAM" id="SSF50729">
    <property type="entry name" value="PH domain-like"/>
    <property type="match status" value="1"/>
</dbReference>
<dbReference type="PROSITE" id="PS01013">
    <property type="entry name" value="OSBP"/>
    <property type="match status" value="1"/>
</dbReference>
<dbReference type="PROSITE" id="PS50003">
    <property type="entry name" value="PH_DOMAIN"/>
    <property type="match status" value="1"/>
</dbReference>
<name>OSBL3_MOUSE</name>
<reference key="1">
    <citation type="journal article" date="2005" name="Science">
        <title>The transcriptional landscape of the mammalian genome.</title>
        <authorList>
            <person name="Carninci P."/>
            <person name="Kasukawa T."/>
            <person name="Katayama S."/>
            <person name="Gough J."/>
            <person name="Frith M.C."/>
            <person name="Maeda N."/>
            <person name="Oyama R."/>
            <person name="Ravasi T."/>
            <person name="Lenhard B."/>
            <person name="Wells C."/>
            <person name="Kodzius R."/>
            <person name="Shimokawa K."/>
            <person name="Bajic V.B."/>
            <person name="Brenner S.E."/>
            <person name="Batalov S."/>
            <person name="Forrest A.R."/>
            <person name="Zavolan M."/>
            <person name="Davis M.J."/>
            <person name="Wilming L.G."/>
            <person name="Aidinis V."/>
            <person name="Allen J.E."/>
            <person name="Ambesi-Impiombato A."/>
            <person name="Apweiler R."/>
            <person name="Aturaliya R.N."/>
            <person name="Bailey T.L."/>
            <person name="Bansal M."/>
            <person name="Baxter L."/>
            <person name="Beisel K.W."/>
            <person name="Bersano T."/>
            <person name="Bono H."/>
            <person name="Chalk A.M."/>
            <person name="Chiu K.P."/>
            <person name="Choudhary V."/>
            <person name="Christoffels A."/>
            <person name="Clutterbuck D.R."/>
            <person name="Crowe M.L."/>
            <person name="Dalla E."/>
            <person name="Dalrymple B.P."/>
            <person name="de Bono B."/>
            <person name="Della Gatta G."/>
            <person name="di Bernardo D."/>
            <person name="Down T."/>
            <person name="Engstrom P."/>
            <person name="Fagiolini M."/>
            <person name="Faulkner G."/>
            <person name="Fletcher C.F."/>
            <person name="Fukushima T."/>
            <person name="Furuno M."/>
            <person name="Futaki S."/>
            <person name="Gariboldi M."/>
            <person name="Georgii-Hemming P."/>
            <person name="Gingeras T.R."/>
            <person name="Gojobori T."/>
            <person name="Green R.E."/>
            <person name="Gustincich S."/>
            <person name="Harbers M."/>
            <person name="Hayashi Y."/>
            <person name="Hensch T.K."/>
            <person name="Hirokawa N."/>
            <person name="Hill D."/>
            <person name="Huminiecki L."/>
            <person name="Iacono M."/>
            <person name="Ikeo K."/>
            <person name="Iwama A."/>
            <person name="Ishikawa T."/>
            <person name="Jakt M."/>
            <person name="Kanapin A."/>
            <person name="Katoh M."/>
            <person name="Kawasawa Y."/>
            <person name="Kelso J."/>
            <person name="Kitamura H."/>
            <person name="Kitano H."/>
            <person name="Kollias G."/>
            <person name="Krishnan S.P."/>
            <person name="Kruger A."/>
            <person name="Kummerfeld S.K."/>
            <person name="Kurochkin I.V."/>
            <person name="Lareau L.F."/>
            <person name="Lazarevic D."/>
            <person name="Lipovich L."/>
            <person name="Liu J."/>
            <person name="Liuni S."/>
            <person name="McWilliam S."/>
            <person name="Madan Babu M."/>
            <person name="Madera M."/>
            <person name="Marchionni L."/>
            <person name="Matsuda H."/>
            <person name="Matsuzawa S."/>
            <person name="Miki H."/>
            <person name="Mignone F."/>
            <person name="Miyake S."/>
            <person name="Morris K."/>
            <person name="Mottagui-Tabar S."/>
            <person name="Mulder N."/>
            <person name="Nakano N."/>
            <person name="Nakauchi H."/>
            <person name="Ng P."/>
            <person name="Nilsson R."/>
            <person name="Nishiguchi S."/>
            <person name="Nishikawa S."/>
            <person name="Nori F."/>
            <person name="Ohara O."/>
            <person name="Okazaki Y."/>
            <person name="Orlando V."/>
            <person name="Pang K.C."/>
            <person name="Pavan W.J."/>
            <person name="Pavesi G."/>
            <person name="Pesole G."/>
            <person name="Petrovsky N."/>
            <person name="Piazza S."/>
            <person name="Reed J."/>
            <person name="Reid J.F."/>
            <person name="Ring B.Z."/>
            <person name="Ringwald M."/>
            <person name="Rost B."/>
            <person name="Ruan Y."/>
            <person name="Salzberg S.L."/>
            <person name="Sandelin A."/>
            <person name="Schneider C."/>
            <person name="Schoenbach C."/>
            <person name="Sekiguchi K."/>
            <person name="Semple C.A."/>
            <person name="Seno S."/>
            <person name="Sessa L."/>
            <person name="Sheng Y."/>
            <person name="Shibata Y."/>
            <person name="Shimada H."/>
            <person name="Shimada K."/>
            <person name="Silva D."/>
            <person name="Sinclair B."/>
            <person name="Sperling S."/>
            <person name="Stupka E."/>
            <person name="Sugiura K."/>
            <person name="Sultana R."/>
            <person name="Takenaka Y."/>
            <person name="Taki K."/>
            <person name="Tammoja K."/>
            <person name="Tan S.L."/>
            <person name="Tang S."/>
            <person name="Taylor M.S."/>
            <person name="Tegner J."/>
            <person name="Teichmann S.A."/>
            <person name="Ueda H.R."/>
            <person name="van Nimwegen E."/>
            <person name="Verardo R."/>
            <person name="Wei C.L."/>
            <person name="Yagi K."/>
            <person name="Yamanishi H."/>
            <person name="Zabarovsky E."/>
            <person name="Zhu S."/>
            <person name="Zimmer A."/>
            <person name="Hide W."/>
            <person name="Bult C."/>
            <person name="Grimmond S.M."/>
            <person name="Teasdale R.D."/>
            <person name="Liu E.T."/>
            <person name="Brusic V."/>
            <person name="Quackenbush J."/>
            <person name="Wahlestedt C."/>
            <person name="Mattick J.S."/>
            <person name="Hume D.A."/>
            <person name="Kai C."/>
            <person name="Sasaki D."/>
            <person name="Tomaru Y."/>
            <person name="Fukuda S."/>
            <person name="Kanamori-Katayama M."/>
            <person name="Suzuki M."/>
            <person name="Aoki J."/>
            <person name="Arakawa T."/>
            <person name="Iida J."/>
            <person name="Imamura K."/>
            <person name="Itoh M."/>
            <person name="Kato T."/>
            <person name="Kawaji H."/>
            <person name="Kawagashira N."/>
            <person name="Kawashima T."/>
            <person name="Kojima M."/>
            <person name="Kondo S."/>
            <person name="Konno H."/>
            <person name="Nakano K."/>
            <person name="Ninomiya N."/>
            <person name="Nishio T."/>
            <person name="Okada M."/>
            <person name="Plessy C."/>
            <person name="Shibata K."/>
            <person name="Shiraki T."/>
            <person name="Suzuki S."/>
            <person name="Tagami M."/>
            <person name="Waki K."/>
            <person name="Watahiki A."/>
            <person name="Okamura-Oho Y."/>
            <person name="Suzuki H."/>
            <person name="Kawai J."/>
            <person name="Hayashizaki Y."/>
        </authorList>
    </citation>
    <scope>NUCLEOTIDE SEQUENCE [LARGE SCALE MRNA]</scope>
    <source>
        <strain>C57BL/6J</strain>
        <tissue>Lung</tissue>
    </source>
</reference>
<reference key="2">
    <citation type="journal article" date="2009" name="PLoS Biol.">
        <title>Lineage-specific biology revealed by a finished genome assembly of the mouse.</title>
        <authorList>
            <person name="Church D.M."/>
            <person name="Goodstadt L."/>
            <person name="Hillier L.W."/>
            <person name="Zody M.C."/>
            <person name="Goldstein S."/>
            <person name="She X."/>
            <person name="Bult C.J."/>
            <person name="Agarwala R."/>
            <person name="Cherry J.L."/>
            <person name="DiCuccio M."/>
            <person name="Hlavina W."/>
            <person name="Kapustin Y."/>
            <person name="Meric P."/>
            <person name="Maglott D."/>
            <person name="Birtle Z."/>
            <person name="Marques A.C."/>
            <person name="Graves T."/>
            <person name="Zhou S."/>
            <person name="Teague B."/>
            <person name="Potamousis K."/>
            <person name="Churas C."/>
            <person name="Place M."/>
            <person name="Herschleb J."/>
            <person name="Runnheim R."/>
            <person name="Forrest D."/>
            <person name="Amos-Landgraf J."/>
            <person name="Schwartz D.C."/>
            <person name="Cheng Z."/>
            <person name="Lindblad-Toh K."/>
            <person name="Eichler E.E."/>
            <person name="Ponting C.P."/>
        </authorList>
    </citation>
    <scope>NUCLEOTIDE SEQUENCE [LARGE SCALE GENOMIC DNA]</scope>
    <source>
        <strain>C57BL/6J</strain>
    </source>
</reference>
<reference key="3">
    <citation type="journal article" date="2004" name="Cell Tissue Res.">
        <title>Subfamily III of mammalian oxysterol-binding protein (OSBP) homologues: the expression and intracellular localization of ORP3, ORP6, and ORP7.</title>
        <authorList>
            <person name="Lehto M."/>
            <person name="Tienari J."/>
            <person name="Lehtonen S."/>
            <person name="Lehtonen E."/>
            <person name="Olkkonen V.M."/>
        </authorList>
    </citation>
    <scope>TISSUE SPECIFICITY</scope>
    <scope>DEVELOPMENTAL STAGE</scope>
</reference>
<reference key="4">
    <citation type="journal article" date="2009" name="Immunity">
        <title>The phagosomal proteome in interferon-gamma-activated macrophages.</title>
        <authorList>
            <person name="Trost M."/>
            <person name="English L."/>
            <person name="Lemieux S."/>
            <person name="Courcelles M."/>
            <person name="Desjardins M."/>
            <person name="Thibault P."/>
        </authorList>
    </citation>
    <scope>IDENTIFICATION BY MASS SPECTROMETRY [LARGE SCALE ANALYSIS]</scope>
</reference>
<reference key="5">
    <citation type="journal article" date="2009" name="Mol. Cell. Proteomics">
        <title>Large scale localization of protein phosphorylation by use of electron capture dissociation mass spectrometry.</title>
        <authorList>
            <person name="Sweet S.M."/>
            <person name="Bailey C.M."/>
            <person name="Cunningham D.L."/>
            <person name="Heath J.K."/>
            <person name="Cooper H.J."/>
        </authorList>
    </citation>
    <scope>IDENTIFICATION BY MASS SPECTROMETRY [LARGE SCALE ANALYSIS]</scope>
    <source>
        <tissue>Embryonic fibroblast</tissue>
    </source>
</reference>
<reference key="6">
    <citation type="journal article" date="2010" name="Cell">
        <title>A tissue-specific atlas of mouse protein phosphorylation and expression.</title>
        <authorList>
            <person name="Huttlin E.L."/>
            <person name="Jedrychowski M.P."/>
            <person name="Elias J.E."/>
            <person name="Goswami T."/>
            <person name="Rad R."/>
            <person name="Beausoleil S.A."/>
            <person name="Villen J."/>
            <person name="Haas W."/>
            <person name="Sowa M.E."/>
            <person name="Gygi S.P."/>
        </authorList>
    </citation>
    <scope>PHOSPHORYLATION [LARGE SCALE ANALYSIS] AT SER-33 AND SER-272</scope>
    <scope>IDENTIFICATION BY MASS SPECTROMETRY [LARGE SCALE ANALYSIS]</scope>
    <source>
        <tissue>Brain</tissue>
        <tissue>Brown adipose tissue</tissue>
        <tissue>Heart</tissue>
        <tissue>Kidney</tissue>
        <tissue>Lung</tissue>
        <tissue>Pancreas</tissue>
        <tissue>Spleen</tissue>
    </source>
</reference>
<reference key="7">
    <citation type="journal article" date="2018" name="Exp. Cell Res.">
        <title>Oxysterol-binding protein-related protein (ORP) 6 localizes to the ER and ER-plasma membrane contact sites and is involved in the turnover of PI4P in cerebellar granule neurons.</title>
        <authorList>
            <person name="Mochizuki S."/>
            <person name="Miki H."/>
            <person name="Zhou R."/>
            <person name="Kido Y."/>
            <person name="Nishimura W."/>
            <person name="Kikuchi M."/>
            <person name="Noda Y."/>
        </authorList>
    </citation>
    <scope>INTERACTION WITH OSBPL6</scope>
    <scope>SUBCELLULAR LOCATION</scope>
</reference>
<organism>
    <name type="scientific">Mus musculus</name>
    <name type="common">Mouse</name>
    <dbReference type="NCBI Taxonomy" id="10090"/>
    <lineage>
        <taxon>Eukaryota</taxon>
        <taxon>Metazoa</taxon>
        <taxon>Chordata</taxon>
        <taxon>Craniata</taxon>
        <taxon>Vertebrata</taxon>
        <taxon>Euteleostomi</taxon>
        <taxon>Mammalia</taxon>
        <taxon>Eutheria</taxon>
        <taxon>Euarchontoglires</taxon>
        <taxon>Glires</taxon>
        <taxon>Rodentia</taxon>
        <taxon>Myomorpha</taxon>
        <taxon>Muroidea</taxon>
        <taxon>Muridae</taxon>
        <taxon>Murinae</taxon>
        <taxon>Mus</taxon>
        <taxon>Mus</taxon>
    </lineage>
</organism>
<accession>Q9DBS9</accession>
<accession>E9QNI5</accession>
<feature type="chain" id="PRO_0000100372" description="Oxysterol-binding protein-related protein 3">
    <location>
        <begin position="1"/>
        <end position="855"/>
    </location>
</feature>
<feature type="domain" description="PH" evidence="2">
    <location>
        <begin position="50"/>
        <end position="145"/>
    </location>
</feature>
<feature type="region of interest" description="Disordered" evidence="3">
    <location>
        <begin position="1"/>
        <end position="32"/>
    </location>
</feature>
<feature type="region of interest" description="Disordered" evidence="3">
    <location>
        <begin position="274"/>
        <end position="293"/>
    </location>
</feature>
<feature type="region of interest" description="Disordered" evidence="3">
    <location>
        <begin position="377"/>
        <end position="396"/>
    </location>
</feature>
<feature type="region of interest" description="Disordered" evidence="3">
    <location>
        <begin position="468"/>
        <end position="490"/>
    </location>
</feature>
<feature type="short sequence motif" description="FFAT 1" evidence="1">
    <location>
        <begin position="161"/>
        <end position="167"/>
    </location>
</feature>
<feature type="short sequence motif" description="FFAT 2" evidence="1">
    <location>
        <begin position="450"/>
        <end position="454"/>
    </location>
</feature>
<feature type="compositionally biased region" description="Low complexity" evidence="3">
    <location>
        <begin position="15"/>
        <end position="31"/>
    </location>
</feature>
<feature type="modified residue" description="Phosphoserine" evidence="1">
    <location>
        <position position="15"/>
    </location>
</feature>
<feature type="modified residue" description="Phosphoserine" evidence="7">
    <location>
        <position position="33"/>
    </location>
</feature>
<feature type="modified residue" description="Phosphoserine" evidence="1">
    <location>
        <position position="199"/>
    </location>
</feature>
<feature type="modified residue" description="Phosphoserine" evidence="1">
    <location>
        <position position="250"/>
    </location>
</feature>
<feature type="modified residue" description="Phosphoserine" evidence="7">
    <location>
        <position position="272"/>
    </location>
</feature>
<feature type="modified residue" description="Phosphoserine" evidence="1">
    <location>
        <position position="277"/>
    </location>
</feature>
<feature type="modified residue" description="Phosphoserine" evidence="1">
    <location>
        <position position="288"/>
    </location>
</feature>
<feature type="modified residue" description="Phosphoserine" evidence="1">
    <location>
        <position position="291"/>
    </location>
</feature>
<feature type="modified residue" description="Phosphoserine" evidence="1">
    <location>
        <position position="340"/>
    </location>
</feature>
<feature type="modified residue" description="Phosphoserine" evidence="1">
    <location>
        <position position="393"/>
    </location>
</feature>
<feature type="modified residue" description="Phosphoserine" evidence="1">
    <location>
        <position position="405"/>
    </location>
</feature>
<feature type="modified residue" description="Phosphoserine" evidence="1">
    <location>
        <position position="408"/>
    </location>
</feature>
<feature type="sequence conflict" description="In Ref. 1; BAB23547." evidence="6" ref="1">
    <original>N</original>
    <variation>D</variation>
    <location>
        <position position="789"/>
    </location>
</feature>
<evidence type="ECO:0000250" key="1">
    <source>
        <dbReference type="UniProtKB" id="Q9H4L5"/>
    </source>
</evidence>
<evidence type="ECO:0000255" key="2">
    <source>
        <dbReference type="PROSITE-ProRule" id="PRU00145"/>
    </source>
</evidence>
<evidence type="ECO:0000256" key="3">
    <source>
        <dbReference type="SAM" id="MobiDB-lite"/>
    </source>
</evidence>
<evidence type="ECO:0000269" key="4">
    <source>
    </source>
</evidence>
<evidence type="ECO:0000269" key="5">
    <source>
    </source>
</evidence>
<evidence type="ECO:0000305" key="6"/>
<evidence type="ECO:0007744" key="7">
    <source>
    </source>
</evidence>
<keyword id="KW-1003">Cell membrane</keyword>
<keyword id="KW-0966">Cell projection</keyword>
<keyword id="KW-0963">Cytoplasm</keyword>
<keyword id="KW-0256">Endoplasmic reticulum</keyword>
<keyword id="KW-0445">Lipid transport</keyword>
<keyword id="KW-0446">Lipid-binding</keyword>
<keyword id="KW-0472">Membrane</keyword>
<keyword id="KW-0539">Nucleus</keyword>
<keyword id="KW-0597">Phosphoprotein</keyword>
<keyword id="KW-1185">Reference proteome</keyword>
<keyword id="KW-0813">Transport</keyword>